<organism>
    <name type="scientific">Edwardsiella ictaluri (strain 93-146)</name>
    <dbReference type="NCBI Taxonomy" id="634503"/>
    <lineage>
        <taxon>Bacteria</taxon>
        <taxon>Pseudomonadati</taxon>
        <taxon>Pseudomonadota</taxon>
        <taxon>Gammaproteobacteria</taxon>
        <taxon>Enterobacterales</taxon>
        <taxon>Hafniaceae</taxon>
        <taxon>Edwardsiella</taxon>
    </lineage>
</organism>
<feature type="chain" id="PRO_1000213546" description="UPF0208 membrane protein NT01EI_2692">
    <location>
        <begin position="1"/>
        <end position="151"/>
    </location>
</feature>
<feature type="transmembrane region" description="Helical" evidence="1">
    <location>
        <begin position="46"/>
        <end position="65"/>
    </location>
</feature>
<feature type="transmembrane region" description="Helical" evidence="1">
    <location>
        <begin position="69"/>
        <end position="91"/>
    </location>
</feature>
<dbReference type="EMBL" id="CP001600">
    <property type="protein sequence ID" value="ACR69860.1"/>
    <property type="molecule type" value="Genomic_DNA"/>
</dbReference>
<dbReference type="STRING" id="67780.B6E78_05450"/>
<dbReference type="KEGG" id="eic:NT01EI_2692"/>
<dbReference type="PATRIC" id="fig|634503.3.peg.2406"/>
<dbReference type="HOGENOM" id="CLU_128746_0_0_6"/>
<dbReference type="OrthoDB" id="7066670at2"/>
<dbReference type="Proteomes" id="UP000001485">
    <property type="component" value="Chromosome"/>
</dbReference>
<dbReference type="GO" id="GO:0005886">
    <property type="term" value="C:plasma membrane"/>
    <property type="evidence" value="ECO:0007669"/>
    <property type="project" value="UniProtKB-SubCell"/>
</dbReference>
<dbReference type="HAMAP" id="MF_01101">
    <property type="entry name" value="UPF0208"/>
    <property type="match status" value="1"/>
</dbReference>
<dbReference type="InterPro" id="IPR007334">
    <property type="entry name" value="UPF0208"/>
</dbReference>
<dbReference type="NCBIfam" id="NF002493">
    <property type="entry name" value="PRK01816.1"/>
    <property type="match status" value="1"/>
</dbReference>
<dbReference type="Pfam" id="PF04217">
    <property type="entry name" value="DUF412"/>
    <property type="match status" value="1"/>
</dbReference>
<gene>
    <name type="ordered locus">NT01EI_2692</name>
</gene>
<comment type="subcellular location">
    <subcellularLocation>
        <location evidence="1">Cell inner membrane</location>
        <topology evidence="1">Multi-pass membrane protein</topology>
    </subcellularLocation>
</comment>
<comment type="similarity">
    <text evidence="1">Belongs to the UPF0208 family.</text>
</comment>
<proteinExistence type="inferred from homology"/>
<accession>C5B8J9</accession>
<sequence>MSSAPTPHVAWFRLFQRGQIYMKTWPNEKRLAPVFPENRVTRATRFAIRFMPPIAMFTLCWQIALGGQLGPAIATALFACSLPMQGLWWLGKRAVTPLPPTLLQWFHQLRDKLQASGIALAPVDGAPTYQSLAELLRRCCKQLDKTFLDDI</sequence>
<evidence type="ECO:0000255" key="1">
    <source>
        <dbReference type="HAMAP-Rule" id="MF_01101"/>
    </source>
</evidence>
<protein>
    <recommendedName>
        <fullName evidence="1">UPF0208 membrane protein NT01EI_2692</fullName>
    </recommendedName>
</protein>
<reference key="1">
    <citation type="submission" date="2009-03" db="EMBL/GenBank/DDBJ databases">
        <title>Complete genome sequence of Edwardsiella ictaluri 93-146.</title>
        <authorList>
            <person name="Williams M.L."/>
            <person name="Gillaspy A.F."/>
            <person name="Dyer D.W."/>
            <person name="Thune R.L."/>
            <person name="Waldbieser G.C."/>
            <person name="Schuster S.C."/>
            <person name="Gipson J."/>
            <person name="Zaitshik J."/>
            <person name="Landry C."/>
            <person name="Lawrence M.L."/>
        </authorList>
    </citation>
    <scope>NUCLEOTIDE SEQUENCE [LARGE SCALE GENOMIC DNA]</scope>
    <source>
        <strain>93-146</strain>
    </source>
</reference>
<keyword id="KW-0997">Cell inner membrane</keyword>
<keyword id="KW-1003">Cell membrane</keyword>
<keyword id="KW-0472">Membrane</keyword>
<keyword id="KW-0812">Transmembrane</keyword>
<keyword id="KW-1133">Transmembrane helix</keyword>
<name>Y2692_EDWI9</name>